<accession>Q220S8</accession>
<feature type="chain" id="PRO_0000311540" description="Putative iron-sulfur cluster insertion protein ErpA">
    <location>
        <begin position="1"/>
        <end position="120"/>
    </location>
</feature>
<feature type="binding site" evidence="1">
    <location>
        <position position="49"/>
    </location>
    <ligand>
        <name>iron-sulfur cluster</name>
        <dbReference type="ChEBI" id="CHEBI:30408"/>
    </ligand>
</feature>
<feature type="binding site" evidence="1">
    <location>
        <position position="113"/>
    </location>
    <ligand>
        <name>iron-sulfur cluster</name>
        <dbReference type="ChEBI" id="CHEBI:30408"/>
    </ligand>
</feature>
<feature type="binding site" evidence="1">
    <location>
        <position position="115"/>
    </location>
    <ligand>
        <name>iron-sulfur cluster</name>
        <dbReference type="ChEBI" id="CHEBI:30408"/>
    </ligand>
</feature>
<gene>
    <name evidence="1" type="primary">erpA</name>
    <name type="ordered locus">Rfer_0725</name>
</gene>
<evidence type="ECO:0000255" key="1">
    <source>
        <dbReference type="HAMAP-Rule" id="MF_01380"/>
    </source>
</evidence>
<protein>
    <recommendedName>
        <fullName evidence="1">Putative iron-sulfur cluster insertion protein ErpA</fullName>
    </recommendedName>
</protein>
<proteinExistence type="inferred from homology"/>
<dbReference type="EMBL" id="CP000267">
    <property type="protein sequence ID" value="ABD68475.1"/>
    <property type="molecule type" value="Genomic_DNA"/>
</dbReference>
<dbReference type="RefSeq" id="WP_011463048.1">
    <property type="nucleotide sequence ID" value="NC_007908.1"/>
</dbReference>
<dbReference type="SMR" id="Q220S8"/>
<dbReference type="STRING" id="338969.Rfer_0725"/>
<dbReference type="KEGG" id="rfr:Rfer_0725"/>
<dbReference type="eggNOG" id="COG0316">
    <property type="taxonomic scope" value="Bacteria"/>
</dbReference>
<dbReference type="HOGENOM" id="CLU_069054_5_3_4"/>
<dbReference type="OrthoDB" id="9801228at2"/>
<dbReference type="Proteomes" id="UP000008332">
    <property type="component" value="Chromosome"/>
</dbReference>
<dbReference type="GO" id="GO:0051537">
    <property type="term" value="F:2 iron, 2 sulfur cluster binding"/>
    <property type="evidence" value="ECO:0007669"/>
    <property type="project" value="TreeGrafter"/>
</dbReference>
<dbReference type="GO" id="GO:0051539">
    <property type="term" value="F:4 iron, 4 sulfur cluster binding"/>
    <property type="evidence" value="ECO:0007669"/>
    <property type="project" value="TreeGrafter"/>
</dbReference>
<dbReference type="GO" id="GO:0005506">
    <property type="term" value="F:iron ion binding"/>
    <property type="evidence" value="ECO:0007669"/>
    <property type="project" value="UniProtKB-UniRule"/>
</dbReference>
<dbReference type="GO" id="GO:0016226">
    <property type="term" value="P:iron-sulfur cluster assembly"/>
    <property type="evidence" value="ECO:0007669"/>
    <property type="project" value="UniProtKB-UniRule"/>
</dbReference>
<dbReference type="FunFam" id="2.60.300.12:FF:000002">
    <property type="entry name" value="Iron-sulfur cluster insertion protein ErpA"/>
    <property type="match status" value="1"/>
</dbReference>
<dbReference type="Gene3D" id="2.60.300.12">
    <property type="entry name" value="HesB-like domain"/>
    <property type="match status" value="1"/>
</dbReference>
<dbReference type="HAMAP" id="MF_01380">
    <property type="entry name" value="Fe_S_insert_ErpA"/>
    <property type="match status" value="1"/>
</dbReference>
<dbReference type="InterPro" id="IPR000361">
    <property type="entry name" value="FeS_biogenesis"/>
</dbReference>
<dbReference type="InterPro" id="IPR016092">
    <property type="entry name" value="FeS_cluster_insertion"/>
</dbReference>
<dbReference type="InterPro" id="IPR017870">
    <property type="entry name" value="FeS_cluster_insertion_CS"/>
</dbReference>
<dbReference type="InterPro" id="IPR023063">
    <property type="entry name" value="FeS_cluster_insertion_RrpA"/>
</dbReference>
<dbReference type="InterPro" id="IPR035903">
    <property type="entry name" value="HesB-like_dom_sf"/>
</dbReference>
<dbReference type="NCBIfam" id="TIGR00049">
    <property type="entry name" value="iron-sulfur cluster assembly accessory protein"/>
    <property type="match status" value="1"/>
</dbReference>
<dbReference type="NCBIfam" id="NF010147">
    <property type="entry name" value="PRK13623.1"/>
    <property type="match status" value="1"/>
</dbReference>
<dbReference type="PANTHER" id="PTHR43011">
    <property type="entry name" value="IRON-SULFUR CLUSTER ASSEMBLY 2 HOMOLOG, MITOCHONDRIAL"/>
    <property type="match status" value="1"/>
</dbReference>
<dbReference type="PANTHER" id="PTHR43011:SF1">
    <property type="entry name" value="IRON-SULFUR CLUSTER ASSEMBLY 2 HOMOLOG, MITOCHONDRIAL"/>
    <property type="match status" value="1"/>
</dbReference>
<dbReference type="Pfam" id="PF01521">
    <property type="entry name" value="Fe-S_biosyn"/>
    <property type="match status" value="1"/>
</dbReference>
<dbReference type="SUPFAM" id="SSF89360">
    <property type="entry name" value="HesB-like domain"/>
    <property type="match status" value="1"/>
</dbReference>
<dbReference type="PROSITE" id="PS01152">
    <property type="entry name" value="HESB"/>
    <property type="match status" value="1"/>
</dbReference>
<keyword id="KW-0408">Iron</keyword>
<keyword id="KW-0411">Iron-sulfur</keyword>
<keyword id="KW-0479">Metal-binding</keyword>
<keyword id="KW-1185">Reference proteome</keyword>
<sequence>MSAVAETIQTEMPSPILFTDSAAAKVADLIAEEGNPDLKLRVFVQGGGCSGFQYGFTFDEITNEDDTTMTKNGVSLLIDAMSYQYLVGAEIDYKEDLEGAQFVIKNPNATTTCGCGSSFS</sequence>
<name>ERPA_ALBFT</name>
<reference key="1">
    <citation type="submission" date="2006-02" db="EMBL/GenBank/DDBJ databases">
        <title>Complete sequence of chromosome of Rhodoferax ferrireducens DSM 15236.</title>
        <authorList>
            <person name="Copeland A."/>
            <person name="Lucas S."/>
            <person name="Lapidus A."/>
            <person name="Barry K."/>
            <person name="Detter J.C."/>
            <person name="Glavina del Rio T."/>
            <person name="Hammon N."/>
            <person name="Israni S."/>
            <person name="Pitluck S."/>
            <person name="Brettin T."/>
            <person name="Bruce D."/>
            <person name="Han C."/>
            <person name="Tapia R."/>
            <person name="Gilna P."/>
            <person name="Kiss H."/>
            <person name="Schmutz J."/>
            <person name="Larimer F."/>
            <person name="Land M."/>
            <person name="Kyrpides N."/>
            <person name="Ivanova N."/>
            <person name="Richardson P."/>
        </authorList>
    </citation>
    <scope>NUCLEOTIDE SEQUENCE [LARGE SCALE GENOMIC DNA]</scope>
    <source>
        <strain>ATCC BAA-621 / DSM 15236 / T118</strain>
    </source>
</reference>
<organism>
    <name type="scientific">Albidiferax ferrireducens (strain ATCC BAA-621 / DSM 15236 / T118)</name>
    <name type="common">Rhodoferax ferrireducens</name>
    <dbReference type="NCBI Taxonomy" id="338969"/>
    <lineage>
        <taxon>Bacteria</taxon>
        <taxon>Pseudomonadati</taxon>
        <taxon>Pseudomonadota</taxon>
        <taxon>Betaproteobacteria</taxon>
        <taxon>Burkholderiales</taxon>
        <taxon>Comamonadaceae</taxon>
        <taxon>Rhodoferax</taxon>
    </lineage>
</organism>
<comment type="function">
    <text evidence="1">Required for insertion of 4Fe-4S clusters.</text>
</comment>
<comment type="cofactor">
    <cofactor evidence="1">
        <name>iron-sulfur cluster</name>
        <dbReference type="ChEBI" id="CHEBI:30408"/>
    </cofactor>
    <text evidence="1">Binds 1 iron-sulfur cluster per subunit.</text>
</comment>
<comment type="subunit">
    <text evidence="1">Homodimer.</text>
</comment>
<comment type="similarity">
    <text evidence="1">Belongs to the HesB/IscA family.</text>
</comment>